<protein>
    <recommendedName>
        <fullName evidence="1">Ketol-acid reductoisomerase (NADP(+))</fullName>
        <shortName evidence="1">KARI</shortName>
        <ecNumber evidence="1">1.1.1.86</ecNumber>
    </recommendedName>
    <alternativeName>
        <fullName evidence="1">Acetohydroxy-acid isomeroreductase</fullName>
        <shortName evidence="1">AHIR</shortName>
    </alternativeName>
    <alternativeName>
        <fullName evidence="1">Alpha-keto-beta-hydroxylacyl reductoisomerase</fullName>
    </alternativeName>
    <alternativeName>
        <fullName evidence="1">Ketol-acid reductoisomerase type 1</fullName>
    </alternativeName>
    <alternativeName>
        <fullName evidence="1">Ketol-acid reductoisomerase type I</fullName>
    </alternativeName>
</protein>
<gene>
    <name evidence="1" type="primary">ilvC</name>
    <name type="ordered locus">ROP_65410</name>
</gene>
<proteinExistence type="inferred from homology"/>
<keyword id="KW-0028">Amino-acid biosynthesis</keyword>
<keyword id="KW-0100">Branched-chain amino acid biosynthesis</keyword>
<keyword id="KW-0460">Magnesium</keyword>
<keyword id="KW-0479">Metal-binding</keyword>
<keyword id="KW-0521">NADP</keyword>
<keyword id="KW-0560">Oxidoreductase</keyword>
<comment type="function">
    <text evidence="1">Involved in the biosynthesis of branched-chain amino acids (BCAA). Catalyzes an alkyl-migration followed by a ketol-acid reduction of (S)-2-acetolactate (S2AL) to yield (R)-2,3-dihydroxy-isovalerate. In the isomerase reaction, S2AL is rearranged via a Mg-dependent methyl migration to produce 3-hydroxy-3-methyl-2-ketobutyrate (HMKB). In the reductase reaction, this 2-ketoacid undergoes a metal-dependent reduction by NADPH to yield (R)-2,3-dihydroxy-isovalerate.</text>
</comment>
<comment type="catalytic activity">
    <reaction evidence="1">
        <text>(2R)-2,3-dihydroxy-3-methylbutanoate + NADP(+) = (2S)-2-acetolactate + NADPH + H(+)</text>
        <dbReference type="Rhea" id="RHEA:22068"/>
        <dbReference type="ChEBI" id="CHEBI:15378"/>
        <dbReference type="ChEBI" id="CHEBI:49072"/>
        <dbReference type="ChEBI" id="CHEBI:57783"/>
        <dbReference type="ChEBI" id="CHEBI:58349"/>
        <dbReference type="ChEBI" id="CHEBI:58476"/>
        <dbReference type="EC" id="1.1.1.86"/>
    </reaction>
</comment>
<comment type="catalytic activity">
    <reaction evidence="1">
        <text>(2R,3R)-2,3-dihydroxy-3-methylpentanoate + NADP(+) = (S)-2-ethyl-2-hydroxy-3-oxobutanoate + NADPH + H(+)</text>
        <dbReference type="Rhea" id="RHEA:13493"/>
        <dbReference type="ChEBI" id="CHEBI:15378"/>
        <dbReference type="ChEBI" id="CHEBI:49256"/>
        <dbReference type="ChEBI" id="CHEBI:49258"/>
        <dbReference type="ChEBI" id="CHEBI:57783"/>
        <dbReference type="ChEBI" id="CHEBI:58349"/>
        <dbReference type="EC" id="1.1.1.86"/>
    </reaction>
</comment>
<comment type="cofactor">
    <cofactor evidence="1">
        <name>Mg(2+)</name>
        <dbReference type="ChEBI" id="CHEBI:18420"/>
    </cofactor>
    <text evidence="1">Binds 2 magnesium ions per subunit.</text>
</comment>
<comment type="pathway">
    <text evidence="1">Amino-acid biosynthesis; L-isoleucine biosynthesis; L-isoleucine from 2-oxobutanoate: step 2/4.</text>
</comment>
<comment type="pathway">
    <text evidence="1">Amino-acid biosynthesis; L-valine biosynthesis; L-valine from pyruvate: step 2/4.</text>
</comment>
<comment type="similarity">
    <text evidence="1">Belongs to the ketol-acid reductoisomerase family.</text>
</comment>
<reference key="1">
    <citation type="submission" date="2009-03" db="EMBL/GenBank/DDBJ databases">
        <title>Comparison of the complete genome sequences of Rhodococcus erythropolis PR4 and Rhodococcus opacus B4.</title>
        <authorList>
            <person name="Takarada H."/>
            <person name="Sekine M."/>
            <person name="Hosoyama A."/>
            <person name="Yamada R."/>
            <person name="Fujisawa T."/>
            <person name="Omata S."/>
            <person name="Shimizu A."/>
            <person name="Tsukatani N."/>
            <person name="Tanikawa S."/>
            <person name="Fujita N."/>
            <person name="Harayama S."/>
        </authorList>
    </citation>
    <scope>NUCLEOTIDE SEQUENCE [LARGE SCALE GENOMIC DNA]</scope>
    <source>
        <strain>B4</strain>
    </source>
</reference>
<accession>C1B2M1</accession>
<dbReference type="EC" id="1.1.1.86" evidence="1"/>
<dbReference type="EMBL" id="AP011115">
    <property type="protein sequence ID" value="BAH54788.1"/>
    <property type="molecule type" value="Genomic_DNA"/>
</dbReference>
<dbReference type="SMR" id="C1B2M1"/>
<dbReference type="STRING" id="632772.ROP_65410"/>
<dbReference type="KEGG" id="rop:ROP_65410"/>
<dbReference type="PATRIC" id="fig|632772.20.peg.6827"/>
<dbReference type="HOGENOM" id="CLU_033821_0_1_11"/>
<dbReference type="OrthoDB" id="9804088at2"/>
<dbReference type="UniPathway" id="UPA00047">
    <property type="reaction ID" value="UER00056"/>
</dbReference>
<dbReference type="UniPathway" id="UPA00049">
    <property type="reaction ID" value="UER00060"/>
</dbReference>
<dbReference type="Proteomes" id="UP000002212">
    <property type="component" value="Chromosome"/>
</dbReference>
<dbReference type="GO" id="GO:0005829">
    <property type="term" value="C:cytosol"/>
    <property type="evidence" value="ECO:0007669"/>
    <property type="project" value="TreeGrafter"/>
</dbReference>
<dbReference type="GO" id="GO:0004455">
    <property type="term" value="F:ketol-acid reductoisomerase activity"/>
    <property type="evidence" value="ECO:0007669"/>
    <property type="project" value="UniProtKB-UniRule"/>
</dbReference>
<dbReference type="GO" id="GO:0000287">
    <property type="term" value="F:magnesium ion binding"/>
    <property type="evidence" value="ECO:0007669"/>
    <property type="project" value="UniProtKB-UniRule"/>
</dbReference>
<dbReference type="GO" id="GO:0050661">
    <property type="term" value="F:NADP binding"/>
    <property type="evidence" value="ECO:0007669"/>
    <property type="project" value="InterPro"/>
</dbReference>
<dbReference type="GO" id="GO:0009097">
    <property type="term" value="P:isoleucine biosynthetic process"/>
    <property type="evidence" value="ECO:0007669"/>
    <property type="project" value="UniProtKB-UniRule"/>
</dbReference>
<dbReference type="GO" id="GO:0009099">
    <property type="term" value="P:L-valine biosynthetic process"/>
    <property type="evidence" value="ECO:0007669"/>
    <property type="project" value="UniProtKB-UniRule"/>
</dbReference>
<dbReference type="FunFam" id="3.40.50.720:FF:000023">
    <property type="entry name" value="Ketol-acid reductoisomerase (NADP(+))"/>
    <property type="match status" value="1"/>
</dbReference>
<dbReference type="Gene3D" id="6.10.240.10">
    <property type="match status" value="1"/>
</dbReference>
<dbReference type="Gene3D" id="3.40.50.720">
    <property type="entry name" value="NAD(P)-binding Rossmann-like Domain"/>
    <property type="match status" value="1"/>
</dbReference>
<dbReference type="HAMAP" id="MF_00435">
    <property type="entry name" value="IlvC"/>
    <property type="match status" value="1"/>
</dbReference>
<dbReference type="InterPro" id="IPR008927">
    <property type="entry name" value="6-PGluconate_DH-like_C_sf"/>
</dbReference>
<dbReference type="InterPro" id="IPR013023">
    <property type="entry name" value="KARI"/>
</dbReference>
<dbReference type="InterPro" id="IPR000506">
    <property type="entry name" value="KARI_C"/>
</dbReference>
<dbReference type="InterPro" id="IPR013116">
    <property type="entry name" value="KARI_N"/>
</dbReference>
<dbReference type="InterPro" id="IPR014359">
    <property type="entry name" value="KARI_prok"/>
</dbReference>
<dbReference type="InterPro" id="IPR036291">
    <property type="entry name" value="NAD(P)-bd_dom_sf"/>
</dbReference>
<dbReference type="NCBIfam" id="TIGR00465">
    <property type="entry name" value="ilvC"/>
    <property type="match status" value="1"/>
</dbReference>
<dbReference type="NCBIfam" id="NF004017">
    <property type="entry name" value="PRK05479.1"/>
    <property type="match status" value="1"/>
</dbReference>
<dbReference type="PANTHER" id="PTHR21371">
    <property type="entry name" value="KETOL-ACID REDUCTOISOMERASE, MITOCHONDRIAL"/>
    <property type="match status" value="1"/>
</dbReference>
<dbReference type="PANTHER" id="PTHR21371:SF1">
    <property type="entry name" value="KETOL-ACID REDUCTOISOMERASE, MITOCHONDRIAL"/>
    <property type="match status" value="1"/>
</dbReference>
<dbReference type="Pfam" id="PF01450">
    <property type="entry name" value="KARI_C"/>
    <property type="match status" value="1"/>
</dbReference>
<dbReference type="Pfam" id="PF07991">
    <property type="entry name" value="KARI_N"/>
    <property type="match status" value="1"/>
</dbReference>
<dbReference type="PIRSF" id="PIRSF000116">
    <property type="entry name" value="IlvC_gammaproteo"/>
    <property type="match status" value="1"/>
</dbReference>
<dbReference type="SUPFAM" id="SSF48179">
    <property type="entry name" value="6-phosphogluconate dehydrogenase C-terminal domain-like"/>
    <property type="match status" value="1"/>
</dbReference>
<dbReference type="SUPFAM" id="SSF51735">
    <property type="entry name" value="NAD(P)-binding Rossmann-fold domains"/>
    <property type="match status" value="1"/>
</dbReference>
<dbReference type="PROSITE" id="PS51851">
    <property type="entry name" value="KARI_C"/>
    <property type="match status" value="1"/>
</dbReference>
<dbReference type="PROSITE" id="PS51850">
    <property type="entry name" value="KARI_N"/>
    <property type="match status" value="1"/>
</dbReference>
<sequence length="337" mass="36345">MAVEMFYDDDADLSIIQGRKVAVIGYGSQGHAHSLSLRDSGVDVRIGLKEGSKSRAKAEEQGLTVGTPAEVSEWADVIMVLAPDTAQASIFTNDIEPNLKDGDALFFGHGLNIHFELIKAPEFVTVGMVAPKGPGHLVRRQFVDGKGVPALIAIDQDPKGEGQALALSYAKAIGGARAGVIKTTFKEETETDLFGEQAVLCGGTEELVKTGFEVMVEAGYAPEMAYFEVLHELKLIVDLMYEGGIARMNYSVSDTAEFGGYLSGPRVIDAGTKERMKAILADIQSGEFTRRLVANVENGNTELEGLRKANAEHPIEVTGKKLRDLMSWVDRPITETA</sequence>
<evidence type="ECO:0000255" key="1">
    <source>
        <dbReference type="HAMAP-Rule" id="MF_00435"/>
    </source>
</evidence>
<evidence type="ECO:0000255" key="2">
    <source>
        <dbReference type="PROSITE-ProRule" id="PRU01197"/>
    </source>
</evidence>
<evidence type="ECO:0000255" key="3">
    <source>
        <dbReference type="PROSITE-ProRule" id="PRU01198"/>
    </source>
</evidence>
<name>ILVC_RHOOB</name>
<organism>
    <name type="scientific">Rhodococcus opacus (strain B4)</name>
    <dbReference type="NCBI Taxonomy" id="632772"/>
    <lineage>
        <taxon>Bacteria</taxon>
        <taxon>Bacillati</taxon>
        <taxon>Actinomycetota</taxon>
        <taxon>Actinomycetes</taxon>
        <taxon>Mycobacteriales</taxon>
        <taxon>Nocardiaceae</taxon>
        <taxon>Rhodococcus</taxon>
    </lineage>
</organism>
<feature type="chain" id="PRO_1000190982" description="Ketol-acid reductoisomerase (NADP(+))">
    <location>
        <begin position="1"/>
        <end position="337"/>
    </location>
</feature>
<feature type="domain" description="KARI N-terminal Rossmann" evidence="2">
    <location>
        <begin position="3"/>
        <end position="183"/>
    </location>
</feature>
<feature type="domain" description="KARI C-terminal knotted" evidence="3">
    <location>
        <begin position="184"/>
        <end position="329"/>
    </location>
</feature>
<feature type="active site" evidence="1">
    <location>
        <position position="109"/>
    </location>
</feature>
<feature type="binding site" evidence="1">
    <location>
        <begin position="26"/>
        <end position="29"/>
    </location>
    <ligand>
        <name>NADP(+)</name>
        <dbReference type="ChEBI" id="CHEBI:58349"/>
    </ligand>
</feature>
<feature type="binding site" evidence="1">
    <location>
        <position position="49"/>
    </location>
    <ligand>
        <name>NADP(+)</name>
        <dbReference type="ChEBI" id="CHEBI:58349"/>
    </ligand>
</feature>
<feature type="binding site" evidence="1">
    <location>
        <position position="52"/>
    </location>
    <ligand>
        <name>NADP(+)</name>
        <dbReference type="ChEBI" id="CHEBI:58349"/>
    </ligand>
</feature>
<feature type="binding site" evidence="1">
    <location>
        <position position="54"/>
    </location>
    <ligand>
        <name>NADP(+)</name>
        <dbReference type="ChEBI" id="CHEBI:58349"/>
    </ligand>
</feature>
<feature type="binding site" evidence="1">
    <location>
        <begin position="84"/>
        <end position="87"/>
    </location>
    <ligand>
        <name>NADP(+)</name>
        <dbReference type="ChEBI" id="CHEBI:58349"/>
    </ligand>
</feature>
<feature type="binding site" evidence="1">
    <location>
        <position position="135"/>
    </location>
    <ligand>
        <name>NADP(+)</name>
        <dbReference type="ChEBI" id="CHEBI:58349"/>
    </ligand>
</feature>
<feature type="binding site" evidence="1">
    <location>
        <position position="192"/>
    </location>
    <ligand>
        <name>Mg(2+)</name>
        <dbReference type="ChEBI" id="CHEBI:18420"/>
        <label>1</label>
    </ligand>
</feature>
<feature type="binding site" evidence="1">
    <location>
        <position position="192"/>
    </location>
    <ligand>
        <name>Mg(2+)</name>
        <dbReference type="ChEBI" id="CHEBI:18420"/>
        <label>2</label>
    </ligand>
</feature>
<feature type="binding site" evidence="1">
    <location>
        <position position="196"/>
    </location>
    <ligand>
        <name>Mg(2+)</name>
        <dbReference type="ChEBI" id="CHEBI:18420"/>
        <label>1</label>
    </ligand>
</feature>
<feature type="binding site" evidence="1">
    <location>
        <position position="228"/>
    </location>
    <ligand>
        <name>Mg(2+)</name>
        <dbReference type="ChEBI" id="CHEBI:18420"/>
        <label>2</label>
    </ligand>
</feature>
<feature type="binding site" evidence="1">
    <location>
        <position position="232"/>
    </location>
    <ligand>
        <name>Mg(2+)</name>
        <dbReference type="ChEBI" id="CHEBI:18420"/>
        <label>2</label>
    </ligand>
</feature>
<feature type="binding site" evidence="1">
    <location>
        <position position="253"/>
    </location>
    <ligand>
        <name>substrate</name>
    </ligand>
</feature>